<accession>P10708</accession>
<evidence type="ECO:0000250" key="1"/>
<evidence type="ECO:0000255" key="2"/>
<evidence type="ECO:0000305" key="3"/>
<sequence length="270" mass="29046">MASACASSTIAAVAFSSPSSRRNGSIVGTTKASFLGGRRLRVSKYSTTPTARSATTVCVAADPDRPLWFPGSTPPPWLDGSLPGDFGFDPLGLASDPESLRWNQQAELVHCRWAMLGAAGIFIPELLTKIGILNTPSWYTAGEQEYFTDTTTLFIVELVLIGWAEGRRWADIIKPGCVNTDPIFPNNKLTGTDVGYPGGLWFDPLGWGSGSPAKIKELRTKEIKNGRLAMLAVMGAWFQHIYTGTGPIDNLFAHLADPGHATIFAAFSPK</sequence>
<comment type="function">
    <text>The light-harvesting complex (LHC) functions as a light receptor, it captures and delivers excitation energy to photosystems with which it is closely associated.</text>
</comment>
<comment type="cofactor">
    <text evidence="1">Binds at least 14 chlorophylls (8 Chl-a and 6 Chl-b) and carotenoids such as lutein and neoxanthin.</text>
</comment>
<comment type="subunit">
    <text>The LHC complex consists of chlorophyll a-b binding proteins.</text>
</comment>
<comment type="subcellular location">
    <subcellularLocation>
        <location>Plastid</location>
        <location>Chloroplast thylakoid membrane</location>
        <topology>Multi-pass membrane protein</topology>
    </subcellularLocation>
</comment>
<comment type="domain">
    <text>The N-terminus of the protein extends into the stroma where it is involved with adhesion of granal membranes and post-translational modifications; both are believed to mediate the distribution of excitation energy between photosystems I and II.</text>
</comment>
<comment type="PTM">
    <text evidence="1">Photoregulated by reversible phosphorylation of its threonine residues.</text>
</comment>
<comment type="similarity">
    <text evidence="3">Belongs to the light-harvesting chlorophyll a/b-binding (LHC) protein family.</text>
</comment>
<keyword id="KW-0148">Chlorophyll</keyword>
<keyword id="KW-0150">Chloroplast</keyword>
<keyword id="KW-0157">Chromophore</keyword>
<keyword id="KW-0460">Magnesium</keyword>
<keyword id="KW-0472">Membrane</keyword>
<keyword id="KW-0479">Metal-binding</keyword>
<keyword id="KW-0597">Phosphoprotein</keyword>
<keyword id="KW-0602">Photosynthesis</keyword>
<keyword id="KW-0603">Photosystem I</keyword>
<keyword id="KW-0604">Photosystem II</keyword>
<keyword id="KW-0934">Plastid</keyword>
<keyword id="KW-1185">Reference proteome</keyword>
<keyword id="KW-0793">Thylakoid</keyword>
<keyword id="KW-0809">Transit peptide</keyword>
<keyword id="KW-0812">Transmembrane</keyword>
<keyword id="KW-1133">Transmembrane helix</keyword>
<organism>
    <name type="scientific">Solanum lycopersicum</name>
    <name type="common">Tomato</name>
    <name type="synonym">Lycopersicon esculentum</name>
    <dbReference type="NCBI Taxonomy" id="4081"/>
    <lineage>
        <taxon>Eukaryota</taxon>
        <taxon>Viridiplantae</taxon>
        <taxon>Streptophyta</taxon>
        <taxon>Embryophyta</taxon>
        <taxon>Tracheophyta</taxon>
        <taxon>Spermatophyta</taxon>
        <taxon>Magnoliopsida</taxon>
        <taxon>eudicotyledons</taxon>
        <taxon>Gunneridae</taxon>
        <taxon>Pentapetalae</taxon>
        <taxon>asterids</taxon>
        <taxon>lamiids</taxon>
        <taxon>Solanales</taxon>
        <taxon>Solanaceae</taxon>
        <taxon>Solanoideae</taxon>
        <taxon>Solaneae</taxon>
        <taxon>Solanum</taxon>
        <taxon>Solanum subgen. Lycopersicon</taxon>
    </lineage>
</organism>
<name>CB12_SOLLC</name>
<protein>
    <recommendedName>
        <fullName>Chlorophyll a-b binding protein 7, chloroplastic</fullName>
    </recommendedName>
    <alternativeName>
        <fullName>LHCI type II CAB-7</fullName>
    </alternativeName>
</protein>
<reference key="1">
    <citation type="journal article" date="1988" name="Plant Mol. Biol.">
        <title>Nucleotide sequence and chromosomal location of Cab-7, the tomato gene encoding the type II chlorophyll a/b-binding polypeptide of photosystem I.</title>
        <authorList>
            <person name="Pichersky E."/>
            <person name="Tanksley S.D."/>
            <person name="Piechulla B."/>
            <person name="Stayton M.M."/>
            <person name="Dunsmuir P."/>
        </authorList>
        <dbReference type="AGRICOLA" id="IND92000604"/>
    </citation>
    <scope>NUCLEOTIDE SEQUENCE [GENOMIC DNA]</scope>
</reference>
<gene>
    <name type="primary">CAB7</name>
</gene>
<proteinExistence type="inferred from homology"/>
<dbReference type="EMBL" id="M20241">
    <property type="protein sequence ID" value="AAA34159.1"/>
    <property type="molecule type" value="Genomic_DNA"/>
</dbReference>
<dbReference type="EMBL" id="X14036">
    <property type="protein sequence ID" value="CAA32197.1"/>
    <property type="molecule type" value="Genomic_DNA"/>
</dbReference>
<dbReference type="PIR" id="S07408">
    <property type="entry name" value="S07408"/>
</dbReference>
<dbReference type="RefSeq" id="NP_001296176.1">
    <property type="nucleotide sequence ID" value="NM_001309247.1"/>
</dbReference>
<dbReference type="SMR" id="P10708"/>
<dbReference type="FunCoup" id="P10708">
    <property type="interactions" value="1026"/>
</dbReference>
<dbReference type="STRING" id="4081.P10708"/>
<dbReference type="PaxDb" id="4081-Solyc10g006230.2.1"/>
<dbReference type="GeneID" id="101264376"/>
<dbReference type="KEGG" id="sly:101264376"/>
<dbReference type="eggNOG" id="ENOG502QRXM">
    <property type="taxonomic scope" value="Eukaryota"/>
</dbReference>
<dbReference type="HOGENOM" id="CLU_057943_6_0_1"/>
<dbReference type="InParanoid" id="P10708"/>
<dbReference type="OrthoDB" id="423598at2759"/>
<dbReference type="PhylomeDB" id="P10708"/>
<dbReference type="Proteomes" id="UP000004994">
    <property type="component" value="Unplaced"/>
</dbReference>
<dbReference type="GO" id="GO:0009535">
    <property type="term" value="C:chloroplast thylakoid membrane"/>
    <property type="evidence" value="ECO:0000318"/>
    <property type="project" value="GO_Central"/>
</dbReference>
<dbReference type="GO" id="GO:0009522">
    <property type="term" value="C:photosystem I"/>
    <property type="evidence" value="ECO:0007669"/>
    <property type="project" value="UniProtKB-KW"/>
</dbReference>
<dbReference type="GO" id="GO:0009523">
    <property type="term" value="C:photosystem II"/>
    <property type="evidence" value="ECO:0007669"/>
    <property type="project" value="UniProtKB-KW"/>
</dbReference>
<dbReference type="GO" id="GO:0016168">
    <property type="term" value="F:chlorophyll binding"/>
    <property type="evidence" value="ECO:0007669"/>
    <property type="project" value="UniProtKB-KW"/>
</dbReference>
<dbReference type="GO" id="GO:0046872">
    <property type="term" value="F:metal ion binding"/>
    <property type="evidence" value="ECO:0007669"/>
    <property type="project" value="UniProtKB-KW"/>
</dbReference>
<dbReference type="GO" id="GO:0009768">
    <property type="term" value="P:photosynthesis, light harvesting in photosystem I"/>
    <property type="evidence" value="ECO:0000318"/>
    <property type="project" value="GO_Central"/>
</dbReference>
<dbReference type="GO" id="GO:0009416">
    <property type="term" value="P:response to light stimulus"/>
    <property type="evidence" value="ECO:0000318"/>
    <property type="project" value="GO_Central"/>
</dbReference>
<dbReference type="FunFam" id="1.10.3460.10:FF:000002">
    <property type="entry name" value="Chlorophyll a-b binding protein, chloroplastic"/>
    <property type="match status" value="1"/>
</dbReference>
<dbReference type="Gene3D" id="1.10.3460.10">
    <property type="entry name" value="Chlorophyll a/b binding protein domain"/>
    <property type="match status" value="1"/>
</dbReference>
<dbReference type="InterPro" id="IPR001344">
    <property type="entry name" value="Chloro_AB-bd_pln"/>
</dbReference>
<dbReference type="InterPro" id="IPR022796">
    <property type="entry name" value="Chloroa_b-bind"/>
</dbReference>
<dbReference type="PANTHER" id="PTHR21649">
    <property type="entry name" value="CHLOROPHYLL A/B BINDING PROTEIN"/>
    <property type="match status" value="1"/>
</dbReference>
<dbReference type="Pfam" id="PF00504">
    <property type="entry name" value="Chloroa_b-bind"/>
    <property type="match status" value="1"/>
</dbReference>
<dbReference type="SUPFAM" id="SSF103511">
    <property type="entry name" value="Chlorophyll a-b binding protein"/>
    <property type="match status" value="1"/>
</dbReference>
<feature type="transit peptide" description="Chloroplast" evidence="2">
    <location>
        <begin position="1"/>
        <end position="42"/>
    </location>
</feature>
<feature type="chain" id="PRO_0000003711" description="Chlorophyll a-b binding protein 7, chloroplastic">
    <location>
        <begin position="43"/>
        <end position="270"/>
    </location>
</feature>
<feature type="transmembrane region" description="Helical" evidence="2">
    <location>
        <begin position="113"/>
        <end position="133"/>
    </location>
</feature>
<feature type="transmembrane region" description="Helical" evidence="2">
    <location>
        <begin position="146"/>
        <end position="166"/>
    </location>
</feature>
<feature type="transmembrane region" description="Helical" evidence="2">
    <location>
        <begin position="228"/>
        <end position="248"/>
    </location>
</feature>
<feature type="binding site" description="axial binding residue" evidence="1">
    <location>
        <position position="68"/>
    </location>
    <ligand>
        <name>chlorophyll b</name>
        <dbReference type="ChEBI" id="CHEBI:61721"/>
        <label>1</label>
    </ligand>
    <ligandPart>
        <name>Mg</name>
        <dbReference type="ChEBI" id="CHEBI:25107"/>
    </ligandPart>
</feature>
<feature type="binding site" evidence="1">
    <location>
        <position position="88"/>
    </location>
    <ligand>
        <name>chlorophyll a</name>
        <dbReference type="ChEBI" id="CHEBI:58416"/>
        <label>1</label>
    </ligand>
</feature>
<feature type="binding site" description="axial binding residue" evidence="1">
    <location>
        <position position="107"/>
    </location>
    <ligand>
        <name>chlorophyll a</name>
        <dbReference type="ChEBI" id="CHEBI:58416"/>
        <label>1</label>
    </ligand>
    <ligandPart>
        <name>Mg</name>
        <dbReference type="ChEBI" id="CHEBI:25107"/>
    </ligandPart>
</feature>
<feature type="binding site" description="axial binding residue" evidence="1">
    <location>
        <position position="110"/>
    </location>
    <ligand>
        <name>chlorophyll a</name>
        <dbReference type="ChEBI" id="CHEBI:58416"/>
        <label>2</label>
    </ligand>
    <ligandPart>
        <name>Mg</name>
        <dbReference type="ChEBI" id="CHEBI:25107"/>
    </ligandPart>
</feature>
<feature type="binding site" evidence="1">
    <location>
        <position position="112"/>
    </location>
    <ligand>
        <name>chlorophyll b</name>
        <dbReference type="ChEBI" id="CHEBI:61721"/>
        <label>2</label>
    </ligand>
</feature>
<feature type="binding site" evidence="1">
    <location>
        <position position="144"/>
    </location>
    <ligand>
        <name>chlorophyll a</name>
        <dbReference type="ChEBI" id="CHEBI:58416"/>
        <label>3</label>
    </ligand>
</feature>
<feature type="binding site" description="axial binding residue" evidence="1">
    <location>
        <position position="155"/>
    </location>
    <ligand>
        <name>chlorophyll b</name>
        <dbReference type="ChEBI" id="CHEBI:61721"/>
        <label>2</label>
    </ligand>
    <ligandPart>
        <name>Mg</name>
        <dbReference type="ChEBI" id="CHEBI:25107"/>
    </ligandPart>
</feature>
<feature type="binding site" description="axial binding residue" evidence="1">
    <location>
        <position position="165"/>
    </location>
    <ligand>
        <name>chlorophyll b</name>
        <dbReference type="ChEBI" id="CHEBI:61721"/>
        <label>3</label>
    </ligand>
    <ligandPart>
        <name>Mg</name>
        <dbReference type="ChEBI" id="CHEBI:25107"/>
    </ligandPart>
</feature>
<feature type="binding site" evidence="1">
    <location>
        <position position="168"/>
    </location>
    <ligand>
        <name>chlorophyll b</name>
        <dbReference type="ChEBI" id="CHEBI:61721"/>
        <label>4</label>
    </ligand>
</feature>
<feature type="binding site" evidence="1">
    <location>
        <position position="221"/>
    </location>
    <ligand>
        <name>chlorophyll a</name>
        <dbReference type="ChEBI" id="CHEBI:58416"/>
        <label>5</label>
    </ligand>
</feature>
<feature type="binding site" description="axial binding residue" evidence="1">
    <location>
        <position position="222"/>
    </location>
    <ligand>
        <name>chlorophyll a</name>
        <dbReference type="ChEBI" id="CHEBI:58416"/>
        <label>3</label>
    </ligand>
    <ligandPart>
        <name>Mg</name>
        <dbReference type="ChEBI" id="CHEBI:25107"/>
    </ligandPart>
</feature>
<feature type="binding site" description="axial binding residue" evidence="1">
    <location>
        <position position="225"/>
    </location>
    <ligand>
        <name>chlorophyll a</name>
        <dbReference type="ChEBI" id="CHEBI:58416"/>
        <label>4</label>
    </ligand>
    <ligandPart>
        <name>Mg</name>
        <dbReference type="ChEBI" id="CHEBI:25107"/>
    </ligandPart>
</feature>
<feature type="binding site" evidence="1">
    <location>
        <position position="227"/>
    </location>
    <ligand>
        <name>chlorophyll a</name>
        <dbReference type="ChEBI" id="CHEBI:58416"/>
        <label>1</label>
    </ligand>
</feature>
<feature type="binding site" description="axial binding residue" evidence="1">
    <location>
        <position position="239"/>
    </location>
    <ligand>
        <name>chlorophyll a</name>
        <dbReference type="ChEBI" id="CHEBI:58416"/>
        <label>5</label>
    </ligand>
    <ligandPart>
        <name>Mg</name>
        <dbReference type="ChEBI" id="CHEBI:25107"/>
    </ligandPart>
</feature>
<feature type="binding site" description="axial binding residue" evidence="1">
    <location>
        <position position="254"/>
    </location>
    <ligand>
        <name>chlorophyll a</name>
        <dbReference type="ChEBI" id="CHEBI:58416"/>
        <label>6</label>
    </ligand>
    <ligandPart>
        <name>Mg</name>
        <dbReference type="ChEBI" id="CHEBI:25107"/>
    </ligandPart>
</feature>